<dbReference type="EMBL" id="CP000094">
    <property type="protein sequence ID" value="ABA76806.1"/>
    <property type="molecule type" value="Genomic_DNA"/>
</dbReference>
<dbReference type="RefSeq" id="WP_002555479.1">
    <property type="nucleotide sequence ID" value="NC_007492.2"/>
</dbReference>
<dbReference type="SMR" id="Q3K5Z8"/>
<dbReference type="GeneID" id="98285428"/>
<dbReference type="KEGG" id="pfo:Pfl01_5069"/>
<dbReference type="eggNOG" id="COG0093">
    <property type="taxonomic scope" value="Bacteria"/>
</dbReference>
<dbReference type="HOGENOM" id="CLU_095071_2_1_6"/>
<dbReference type="Proteomes" id="UP000002704">
    <property type="component" value="Chromosome"/>
</dbReference>
<dbReference type="GO" id="GO:0022625">
    <property type="term" value="C:cytosolic large ribosomal subunit"/>
    <property type="evidence" value="ECO:0007669"/>
    <property type="project" value="TreeGrafter"/>
</dbReference>
<dbReference type="GO" id="GO:0070180">
    <property type="term" value="F:large ribosomal subunit rRNA binding"/>
    <property type="evidence" value="ECO:0007669"/>
    <property type="project" value="TreeGrafter"/>
</dbReference>
<dbReference type="GO" id="GO:0003735">
    <property type="term" value="F:structural constituent of ribosome"/>
    <property type="evidence" value="ECO:0007669"/>
    <property type="project" value="InterPro"/>
</dbReference>
<dbReference type="GO" id="GO:0006412">
    <property type="term" value="P:translation"/>
    <property type="evidence" value="ECO:0007669"/>
    <property type="project" value="UniProtKB-UniRule"/>
</dbReference>
<dbReference type="CDD" id="cd00337">
    <property type="entry name" value="Ribosomal_uL14"/>
    <property type="match status" value="1"/>
</dbReference>
<dbReference type="FunFam" id="2.40.150.20:FF:000001">
    <property type="entry name" value="50S ribosomal protein L14"/>
    <property type="match status" value="1"/>
</dbReference>
<dbReference type="Gene3D" id="2.40.150.20">
    <property type="entry name" value="Ribosomal protein L14"/>
    <property type="match status" value="1"/>
</dbReference>
<dbReference type="HAMAP" id="MF_01367">
    <property type="entry name" value="Ribosomal_uL14"/>
    <property type="match status" value="1"/>
</dbReference>
<dbReference type="InterPro" id="IPR000218">
    <property type="entry name" value="Ribosomal_uL14"/>
</dbReference>
<dbReference type="InterPro" id="IPR005745">
    <property type="entry name" value="Ribosomal_uL14_bac-type"/>
</dbReference>
<dbReference type="InterPro" id="IPR019972">
    <property type="entry name" value="Ribosomal_uL14_CS"/>
</dbReference>
<dbReference type="InterPro" id="IPR036853">
    <property type="entry name" value="Ribosomal_uL14_sf"/>
</dbReference>
<dbReference type="NCBIfam" id="TIGR01067">
    <property type="entry name" value="rplN_bact"/>
    <property type="match status" value="1"/>
</dbReference>
<dbReference type="PANTHER" id="PTHR11761">
    <property type="entry name" value="50S/60S RIBOSOMAL PROTEIN L14/L23"/>
    <property type="match status" value="1"/>
</dbReference>
<dbReference type="PANTHER" id="PTHR11761:SF3">
    <property type="entry name" value="LARGE RIBOSOMAL SUBUNIT PROTEIN UL14M"/>
    <property type="match status" value="1"/>
</dbReference>
<dbReference type="Pfam" id="PF00238">
    <property type="entry name" value="Ribosomal_L14"/>
    <property type="match status" value="1"/>
</dbReference>
<dbReference type="SMART" id="SM01374">
    <property type="entry name" value="Ribosomal_L14"/>
    <property type="match status" value="1"/>
</dbReference>
<dbReference type="SUPFAM" id="SSF50193">
    <property type="entry name" value="Ribosomal protein L14"/>
    <property type="match status" value="1"/>
</dbReference>
<dbReference type="PROSITE" id="PS00049">
    <property type="entry name" value="RIBOSOMAL_L14"/>
    <property type="match status" value="1"/>
</dbReference>
<reference key="1">
    <citation type="journal article" date="2009" name="Genome Biol.">
        <title>Genomic and genetic analyses of diversity and plant interactions of Pseudomonas fluorescens.</title>
        <authorList>
            <person name="Silby M.W."/>
            <person name="Cerdeno-Tarraga A.M."/>
            <person name="Vernikos G.S."/>
            <person name="Giddens S.R."/>
            <person name="Jackson R.W."/>
            <person name="Preston G.M."/>
            <person name="Zhang X.-X."/>
            <person name="Moon C.D."/>
            <person name="Gehrig S.M."/>
            <person name="Godfrey S.A.C."/>
            <person name="Knight C.G."/>
            <person name="Malone J.G."/>
            <person name="Robinson Z."/>
            <person name="Spiers A.J."/>
            <person name="Harris S."/>
            <person name="Challis G.L."/>
            <person name="Yaxley A.M."/>
            <person name="Harris D."/>
            <person name="Seeger K."/>
            <person name="Murphy L."/>
            <person name="Rutter S."/>
            <person name="Squares R."/>
            <person name="Quail M.A."/>
            <person name="Saunders E."/>
            <person name="Mavromatis K."/>
            <person name="Brettin T.S."/>
            <person name="Bentley S.D."/>
            <person name="Hothersall J."/>
            <person name="Stephens E."/>
            <person name="Thomas C.M."/>
            <person name="Parkhill J."/>
            <person name="Levy S.B."/>
            <person name="Rainey P.B."/>
            <person name="Thomson N.R."/>
        </authorList>
    </citation>
    <scope>NUCLEOTIDE SEQUENCE [LARGE SCALE GENOMIC DNA]</scope>
    <source>
        <strain>Pf0-1</strain>
    </source>
</reference>
<feature type="chain" id="PRO_0000266527" description="Large ribosomal subunit protein uL14">
    <location>
        <begin position="1"/>
        <end position="122"/>
    </location>
</feature>
<proteinExistence type="inferred from homology"/>
<name>RL14_PSEPF</name>
<organism>
    <name type="scientific">Pseudomonas fluorescens (strain Pf0-1)</name>
    <dbReference type="NCBI Taxonomy" id="205922"/>
    <lineage>
        <taxon>Bacteria</taxon>
        <taxon>Pseudomonadati</taxon>
        <taxon>Pseudomonadota</taxon>
        <taxon>Gammaproteobacteria</taxon>
        <taxon>Pseudomonadales</taxon>
        <taxon>Pseudomonadaceae</taxon>
        <taxon>Pseudomonas</taxon>
    </lineage>
</organism>
<keyword id="KW-0687">Ribonucleoprotein</keyword>
<keyword id="KW-0689">Ribosomal protein</keyword>
<keyword id="KW-0694">RNA-binding</keyword>
<keyword id="KW-0699">rRNA-binding</keyword>
<evidence type="ECO:0000255" key="1">
    <source>
        <dbReference type="HAMAP-Rule" id="MF_01367"/>
    </source>
</evidence>
<evidence type="ECO:0000305" key="2"/>
<comment type="function">
    <text evidence="1">Binds to 23S rRNA. Forms part of two intersubunit bridges in the 70S ribosome.</text>
</comment>
<comment type="subunit">
    <text evidence="1">Part of the 50S ribosomal subunit. Forms a cluster with proteins L3 and L19. In the 70S ribosome, L14 and L19 interact and together make contacts with the 16S rRNA in bridges B5 and B8.</text>
</comment>
<comment type="similarity">
    <text evidence="1">Belongs to the universal ribosomal protein uL14 family.</text>
</comment>
<gene>
    <name evidence="1" type="primary">rplN</name>
    <name type="ordered locus">Pfl01_5069</name>
</gene>
<sequence>MIQTQSMLDVADNSGARRVMCIKVLGGSHRRYAGIGDIIKVTVKEAIPRGKVKKGQVMTAVVVRTRHGVRRADGSIIRFDGNAAVLLNNKQEPIGTRIFGPVTRELRTEKFMKIVSLAPEVL</sequence>
<protein>
    <recommendedName>
        <fullName evidence="1">Large ribosomal subunit protein uL14</fullName>
    </recommendedName>
    <alternativeName>
        <fullName evidence="2">50S ribosomal protein L14</fullName>
    </alternativeName>
</protein>
<accession>Q3K5Z8</accession>